<organism>
    <name type="scientific">Arabidopsis thaliana</name>
    <name type="common">Mouse-ear cress</name>
    <dbReference type="NCBI Taxonomy" id="3702"/>
    <lineage>
        <taxon>Eukaryota</taxon>
        <taxon>Viridiplantae</taxon>
        <taxon>Streptophyta</taxon>
        <taxon>Embryophyta</taxon>
        <taxon>Tracheophyta</taxon>
        <taxon>Spermatophyta</taxon>
        <taxon>Magnoliopsida</taxon>
        <taxon>eudicotyledons</taxon>
        <taxon>Gunneridae</taxon>
        <taxon>Pentapetalae</taxon>
        <taxon>rosids</taxon>
        <taxon>malvids</taxon>
        <taxon>Brassicales</taxon>
        <taxon>Brassicaceae</taxon>
        <taxon>Camelineae</taxon>
        <taxon>Arabidopsis</taxon>
    </lineage>
</organism>
<name>HMDH2_ARATH</name>
<dbReference type="EC" id="1.1.1.34"/>
<dbReference type="EMBL" id="L19262">
    <property type="protein sequence ID" value="AAA67317.1"/>
    <property type="molecule type" value="Genomic_DNA"/>
</dbReference>
<dbReference type="EMBL" id="CP002685">
    <property type="protein sequence ID" value="AEC06618.1"/>
    <property type="molecule type" value="Genomic_DNA"/>
</dbReference>
<dbReference type="EMBL" id="AY057680">
    <property type="protein sequence ID" value="AAL15311.1"/>
    <property type="molecule type" value="mRNA"/>
</dbReference>
<dbReference type="EMBL" id="AY143930">
    <property type="protein sequence ID" value="AAN28869.1"/>
    <property type="molecule type" value="mRNA"/>
</dbReference>
<dbReference type="PIR" id="D84551">
    <property type="entry name" value="D84551"/>
</dbReference>
<dbReference type="RefSeq" id="NP_179329.1">
    <property type="nucleotide sequence ID" value="NM_127292.3"/>
</dbReference>
<dbReference type="SMR" id="P43256"/>
<dbReference type="BioGRID" id="1601">
    <property type="interactions" value="1"/>
</dbReference>
<dbReference type="FunCoup" id="P43256">
    <property type="interactions" value="656"/>
</dbReference>
<dbReference type="STRING" id="3702.P43256"/>
<dbReference type="GlyCosmos" id="P43256">
    <property type="glycosylation" value="3 sites, No reported glycans"/>
</dbReference>
<dbReference type="GlyGen" id="P43256">
    <property type="glycosylation" value="3 sites"/>
</dbReference>
<dbReference type="iPTMnet" id="P43256"/>
<dbReference type="PaxDb" id="3702-AT2G17370.1"/>
<dbReference type="ProteomicsDB" id="230355"/>
<dbReference type="EnsemblPlants" id="AT2G17370.1">
    <property type="protein sequence ID" value="AT2G17370.1"/>
    <property type="gene ID" value="AT2G17370"/>
</dbReference>
<dbReference type="GeneID" id="816244"/>
<dbReference type="Gramene" id="AT2G17370.1">
    <property type="protein sequence ID" value="AT2G17370.1"/>
    <property type="gene ID" value="AT2G17370"/>
</dbReference>
<dbReference type="KEGG" id="ath:AT2G17370"/>
<dbReference type="Araport" id="AT2G17370"/>
<dbReference type="TAIR" id="AT2G17370">
    <property type="gene designation" value="HMG2"/>
</dbReference>
<dbReference type="eggNOG" id="KOG2480">
    <property type="taxonomic scope" value="Eukaryota"/>
</dbReference>
<dbReference type="HOGENOM" id="CLU_001734_2_2_1"/>
<dbReference type="InParanoid" id="P43256"/>
<dbReference type="OMA" id="ASAVNWI"/>
<dbReference type="OrthoDB" id="310654at2759"/>
<dbReference type="PhylomeDB" id="P43256"/>
<dbReference type="UniPathway" id="UPA00058">
    <property type="reaction ID" value="UER00103"/>
</dbReference>
<dbReference type="PRO" id="PR:P43256"/>
<dbReference type="Proteomes" id="UP000006548">
    <property type="component" value="Chromosome 2"/>
</dbReference>
<dbReference type="ExpressionAtlas" id="P43256">
    <property type="expression patterns" value="baseline and differential"/>
</dbReference>
<dbReference type="GO" id="GO:0005789">
    <property type="term" value="C:endoplasmic reticulum membrane"/>
    <property type="evidence" value="ECO:0007669"/>
    <property type="project" value="UniProtKB-SubCell"/>
</dbReference>
<dbReference type="GO" id="GO:0043231">
    <property type="term" value="C:intracellular membrane-bounded organelle"/>
    <property type="evidence" value="ECO:0000314"/>
    <property type="project" value="TAIR"/>
</dbReference>
<dbReference type="GO" id="GO:0004420">
    <property type="term" value="F:hydroxymethylglutaryl-CoA reductase (NADPH) activity"/>
    <property type="evidence" value="ECO:0007669"/>
    <property type="project" value="UniProtKB-EC"/>
</dbReference>
<dbReference type="GO" id="GO:0015936">
    <property type="term" value="P:coenzyme A metabolic process"/>
    <property type="evidence" value="ECO:0007669"/>
    <property type="project" value="InterPro"/>
</dbReference>
<dbReference type="GO" id="GO:0008299">
    <property type="term" value="P:isoprenoid biosynthetic process"/>
    <property type="evidence" value="ECO:0000304"/>
    <property type="project" value="TAIR"/>
</dbReference>
<dbReference type="GO" id="GO:0016126">
    <property type="term" value="P:sterol biosynthetic process"/>
    <property type="evidence" value="ECO:0000315"/>
    <property type="project" value="TAIR"/>
</dbReference>
<dbReference type="GO" id="GO:0016104">
    <property type="term" value="P:triterpenoid biosynthetic process"/>
    <property type="evidence" value="ECO:0000315"/>
    <property type="project" value="TAIR"/>
</dbReference>
<dbReference type="CDD" id="cd00643">
    <property type="entry name" value="HMG-CoA_reductase_classI"/>
    <property type="match status" value="1"/>
</dbReference>
<dbReference type="FunFam" id="1.10.3270.10:FF:000002">
    <property type="entry name" value="3-hydroxy-3-methylglutaryl coenzyme A reductase"/>
    <property type="match status" value="1"/>
</dbReference>
<dbReference type="FunFam" id="3.30.70.420:FF:000001">
    <property type="entry name" value="3-hydroxy-3-methylglutaryl coenzyme A reductase"/>
    <property type="match status" value="1"/>
</dbReference>
<dbReference type="FunFam" id="3.90.770.10:FF:000001">
    <property type="entry name" value="3-hydroxy-3-methylglutaryl coenzyme A reductase"/>
    <property type="match status" value="1"/>
</dbReference>
<dbReference type="Gene3D" id="3.90.770.10">
    <property type="entry name" value="3-hydroxy-3-methylglutaryl-coenzyme A Reductase, Chain A, domain 2"/>
    <property type="match status" value="1"/>
</dbReference>
<dbReference type="Gene3D" id="1.10.3270.10">
    <property type="entry name" value="HMGR, N-terminal domain"/>
    <property type="match status" value="1"/>
</dbReference>
<dbReference type="Gene3D" id="3.30.70.420">
    <property type="entry name" value="Hydroxymethylglutaryl-CoA reductase, class I/II, NAD/NADP-binding domain"/>
    <property type="match status" value="1"/>
</dbReference>
<dbReference type="InterPro" id="IPR002202">
    <property type="entry name" value="HMG_CoA_Rdtase"/>
</dbReference>
<dbReference type="InterPro" id="IPR023074">
    <property type="entry name" value="HMG_CoA_Rdtase_cat_sf"/>
</dbReference>
<dbReference type="InterPro" id="IPR023076">
    <property type="entry name" value="HMG_CoA_Rdtase_CS"/>
</dbReference>
<dbReference type="InterPro" id="IPR004554">
    <property type="entry name" value="HMG_CoA_Rdtase_eu_arc"/>
</dbReference>
<dbReference type="InterPro" id="IPR023282">
    <property type="entry name" value="HMG_CoA_Rdtase_N"/>
</dbReference>
<dbReference type="InterPro" id="IPR009023">
    <property type="entry name" value="HMG_CoA_Rdtase_NAD(P)-bd_sf"/>
</dbReference>
<dbReference type="InterPro" id="IPR009029">
    <property type="entry name" value="HMG_CoA_Rdtase_sub-bd_dom_sf"/>
</dbReference>
<dbReference type="NCBIfam" id="TIGR00533">
    <property type="entry name" value="HMG_CoA_R_NADP"/>
    <property type="match status" value="1"/>
</dbReference>
<dbReference type="PANTHER" id="PTHR10572">
    <property type="entry name" value="3-HYDROXY-3-METHYLGLUTARYL-COENZYME A REDUCTASE"/>
    <property type="match status" value="1"/>
</dbReference>
<dbReference type="PANTHER" id="PTHR10572:SF51">
    <property type="entry name" value="3-HYDROXY-3-METHYLGLUTARYL-COENZYME A REDUCTASE 2"/>
    <property type="match status" value="1"/>
</dbReference>
<dbReference type="Pfam" id="PF00368">
    <property type="entry name" value="HMG-CoA_red"/>
    <property type="match status" value="1"/>
</dbReference>
<dbReference type="PRINTS" id="PR00071">
    <property type="entry name" value="HMGCOARDTASE"/>
</dbReference>
<dbReference type="SUPFAM" id="SSF55035">
    <property type="entry name" value="NAD-binding domain of HMG-CoA reductase"/>
    <property type="match status" value="1"/>
</dbReference>
<dbReference type="SUPFAM" id="SSF56542">
    <property type="entry name" value="Substrate-binding domain of HMG-CoA reductase"/>
    <property type="match status" value="1"/>
</dbReference>
<dbReference type="PROSITE" id="PS00066">
    <property type="entry name" value="HMG_COA_REDUCTASE_1"/>
    <property type="match status" value="1"/>
</dbReference>
<dbReference type="PROSITE" id="PS00318">
    <property type="entry name" value="HMG_COA_REDUCTASE_2"/>
    <property type="match status" value="1"/>
</dbReference>
<dbReference type="PROSITE" id="PS01192">
    <property type="entry name" value="HMG_COA_REDUCTASE_3"/>
    <property type="match status" value="1"/>
</dbReference>
<dbReference type="PROSITE" id="PS50065">
    <property type="entry name" value="HMG_COA_REDUCTASE_4"/>
    <property type="match status" value="1"/>
</dbReference>
<evidence type="ECO:0000250" key="1"/>
<evidence type="ECO:0000250" key="2">
    <source>
        <dbReference type="UniProtKB" id="P14891"/>
    </source>
</evidence>
<evidence type="ECO:0000255" key="3"/>
<evidence type="ECO:0000255" key="4">
    <source>
        <dbReference type="PROSITE-ProRule" id="PRU10003"/>
    </source>
</evidence>
<evidence type="ECO:0000269" key="5">
    <source>
    </source>
</evidence>
<evidence type="ECO:0000269" key="6">
    <source>
    </source>
</evidence>
<evidence type="ECO:0000269" key="7">
    <source>
    </source>
</evidence>
<evidence type="ECO:0000269" key="8">
    <source>
    </source>
</evidence>
<evidence type="ECO:0000269" key="9">
    <source>
    </source>
</evidence>
<evidence type="ECO:0000269" key="10">
    <source>
    </source>
</evidence>
<evidence type="ECO:0000305" key="11"/>
<sequence>MEDLRRRFPTKKNGEEISNVAVDPPLRKASDALPLPLYLTNTFFLSLFFATVYFLLSRWREKIRNSTPLHVVDLSEICALIGFVASFIYLLGFCGIDLIFRSSSDDDVWVNDGMIPCNQSLDCREVLPIKPNSVDPPRESELDSVEDEEIVKLVIDGTIPSYSLETKLGDCKRAAAIRREAVQRITGKSLTGLPLEGFDYNSILGQCCEMPVGYVQIPVGIAGPLLLDGVEYSVPMATTEGCLVASTNRGFKAIHLSGGAFSVLVKDAMTRAPVVRFPSARRAALVMFYLQDPSNFERLSLIFNKSSRFARLQSITCTIAGRNLYPRFACSTGDAMGMNMVSKGVQNVLDFVKSEFPDMDVIGISGNYCSDKKASAVNWIEGRGKHVVCEAFIKAEIVEKVLKTSVEALVELNTLKNLVGSAMAGSLGGFNAHSSNIVSAVFIATGQDPAQNVESSHCMTMILPDGDDLHISVSMPCIEVGTVGGGTQLASQAACLNLLGVKGSNNEKPGSNAQQLARIVAGSVLAGELSLMSAIAAGQLVKSHMKYNRSSRDIGPSSQVNR</sequence>
<accession>P43256</accession>
<protein>
    <recommendedName>
        <fullName>3-hydroxy-3-methylglutaryl-coenzyme A reductase 2</fullName>
        <shortName>AtHMGR2</shortName>
        <shortName>HMG-CoA reductase 2</shortName>
        <ecNumber>1.1.1.34</ecNumber>
    </recommendedName>
</protein>
<reference key="1">
    <citation type="journal article" date="1994" name="Proc. Natl. Acad. Sci. U.S.A.">
        <title>Arabidopsis thaliana contains two differentially expressed 3-hydroxy-3-methylglutaryl-CoA reductase genes, which encode microsomal forms of the enzyme.</title>
        <authorList>
            <person name="Enjuto M."/>
            <person name="Balcells L."/>
            <person name="Campos N."/>
            <person name="Caelles C."/>
            <person name="Arro M."/>
            <person name="Boronat A."/>
        </authorList>
    </citation>
    <scope>NUCLEOTIDE SEQUENCE [GENOMIC DNA]</scope>
    <scope>SUBCELLULAR LOCATION</scope>
    <scope>TISSUE SPECIFICITY</scope>
    <source>
        <strain>cv. Columbia</strain>
    </source>
</reference>
<reference key="2">
    <citation type="journal article" date="1999" name="Nature">
        <title>Sequence and analysis of chromosome 2 of the plant Arabidopsis thaliana.</title>
        <authorList>
            <person name="Lin X."/>
            <person name="Kaul S."/>
            <person name="Rounsley S.D."/>
            <person name="Shea T.P."/>
            <person name="Benito M.-I."/>
            <person name="Town C.D."/>
            <person name="Fujii C.Y."/>
            <person name="Mason T.M."/>
            <person name="Bowman C.L."/>
            <person name="Barnstead M.E."/>
            <person name="Feldblyum T.V."/>
            <person name="Buell C.R."/>
            <person name="Ketchum K.A."/>
            <person name="Lee J.J."/>
            <person name="Ronning C.M."/>
            <person name="Koo H.L."/>
            <person name="Moffat K.S."/>
            <person name="Cronin L.A."/>
            <person name="Shen M."/>
            <person name="Pai G."/>
            <person name="Van Aken S."/>
            <person name="Umayam L."/>
            <person name="Tallon L.J."/>
            <person name="Gill J.E."/>
            <person name="Adams M.D."/>
            <person name="Carrera A.J."/>
            <person name="Creasy T.H."/>
            <person name="Goodman H.M."/>
            <person name="Somerville C.R."/>
            <person name="Copenhaver G.P."/>
            <person name="Preuss D."/>
            <person name="Nierman W.C."/>
            <person name="White O."/>
            <person name="Eisen J.A."/>
            <person name="Salzberg S.L."/>
            <person name="Fraser C.M."/>
            <person name="Venter J.C."/>
        </authorList>
    </citation>
    <scope>NUCLEOTIDE SEQUENCE [LARGE SCALE GENOMIC DNA]</scope>
    <source>
        <strain>cv. Columbia</strain>
    </source>
</reference>
<reference key="3">
    <citation type="journal article" date="2017" name="Plant J.">
        <title>Araport11: a complete reannotation of the Arabidopsis thaliana reference genome.</title>
        <authorList>
            <person name="Cheng C.Y."/>
            <person name="Krishnakumar V."/>
            <person name="Chan A.P."/>
            <person name="Thibaud-Nissen F."/>
            <person name="Schobel S."/>
            <person name="Town C.D."/>
        </authorList>
    </citation>
    <scope>GENOME REANNOTATION</scope>
    <source>
        <strain>cv. Columbia</strain>
    </source>
</reference>
<reference key="4">
    <citation type="journal article" date="2003" name="Science">
        <title>Empirical analysis of transcriptional activity in the Arabidopsis genome.</title>
        <authorList>
            <person name="Yamada K."/>
            <person name="Lim J."/>
            <person name="Dale J.M."/>
            <person name="Chen H."/>
            <person name="Shinn P."/>
            <person name="Palm C.J."/>
            <person name="Southwick A.M."/>
            <person name="Wu H.C."/>
            <person name="Kim C.J."/>
            <person name="Nguyen M."/>
            <person name="Pham P.K."/>
            <person name="Cheuk R.F."/>
            <person name="Karlin-Newmann G."/>
            <person name="Liu S.X."/>
            <person name="Lam B."/>
            <person name="Sakano H."/>
            <person name="Wu T."/>
            <person name="Yu G."/>
            <person name="Miranda M."/>
            <person name="Quach H.L."/>
            <person name="Tripp M."/>
            <person name="Chang C.H."/>
            <person name="Lee J.M."/>
            <person name="Toriumi M.J."/>
            <person name="Chan M.M."/>
            <person name="Tang C.C."/>
            <person name="Onodera C.S."/>
            <person name="Deng J.M."/>
            <person name="Akiyama K."/>
            <person name="Ansari Y."/>
            <person name="Arakawa T."/>
            <person name="Banh J."/>
            <person name="Banno F."/>
            <person name="Bowser L."/>
            <person name="Brooks S.Y."/>
            <person name="Carninci P."/>
            <person name="Chao Q."/>
            <person name="Choy N."/>
            <person name="Enju A."/>
            <person name="Goldsmith A.D."/>
            <person name="Gurjal M."/>
            <person name="Hansen N.F."/>
            <person name="Hayashizaki Y."/>
            <person name="Johnson-Hopson C."/>
            <person name="Hsuan V.W."/>
            <person name="Iida K."/>
            <person name="Karnes M."/>
            <person name="Khan S."/>
            <person name="Koesema E."/>
            <person name="Ishida J."/>
            <person name="Jiang P.X."/>
            <person name="Jones T."/>
            <person name="Kawai J."/>
            <person name="Kamiya A."/>
            <person name="Meyers C."/>
            <person name="Nakajima M."/>
            <person name="Narusaka M."/>
            <person name="Seki M."/>
            <person name="Sakurai T."/>
            <person name="Satou M."/>
            <person name="Tamse R."/>
            <person name="Vaysberg M."/>
            <person name="Wallender E.K."/>
            <person name="Wong C."/>
            <person name="Yamamura Y."/>
            <person name="Yuan S."/>
            <person name="Shinozaki K."/>
            <person name="Davis R.W."/>
            <person name="Theologis A."/>
            <person name="Ecker J.R."/>
        </authorList>
    </citation>
    <scope>NUCLEOTIDE SEQUENCE [LARGE SCALE MRNA]</scope>
    <source>
        <strain>cv. Columbia</strain>
    </source>
</reference>
<reference key="5">
    <citation type="journal article" date="1995" name="Plant Cell">
        <title>Expression of the Arabidopsis HMG2 gene, encoding 3-hydroxy-3-methylglutaryl coenzyme A reductase, is restricted to meristematic and floral tissues.</title>
        <authorList>
            <person name="Enjuto M."/>
            <person name="Lumbreras V."/>
            <person name="Marin C."/>
            <person name="Boronat A."/>
        </authorList>
    </citation>
    <scope>TISSUE SPECIFICITY</scope>
</reference>
<reference key="6">
    <citation type="journal article" date="2004" name="Plant J.">
        <title>Loss of function of 3-hydroxy-3-methylglutaryl coenzyme A reductase 1 (HMG1) in Arabidopsis leads to dwarfing, early senescence and male sterility, and reduced sterol levels.</title>
        <authorList>
            <person name="Suzuki M."/>
            <person name="Kamide Y."/>
            <person name="Nagata N."/>
            <person name="Seki H."/>
            <person name="Ohyama K."/>
            <person name="Kato H."/>
            <person name="Masuda K."/>
            <person name="Sato S."/>
            <person name="Kato T."/>
            <person name="Tabata S."/>
            <person name="Yoshida S."/>
            <person name="Muranaka T."/>
        </authorList>
    </citation>
    <scope>FUNCTION</scope>
    <scope>DISRUPTION PHENOTYPE</scope>
</reference>
<reference key="7">
    <citation type="journal article" date="2007" name="Chem. Pharm. Bull.">
        <title>Chemical phenotypes of the hmg1 and hmg2 mutants of Arabidopsis demonstrate the in-planta role of HMG-CoA reductase in triterpene biosynthesis.</title>
        <authorList>
            <person name="Ohyama K."/>
            <person name="Suzuki M."/>
            <person name="Masuda K."/>
            <person name="Yoshida S."/>
            <person name="Muranaka T."/>
        </authorList>
    </citation>
    <scope>FUNCTION</scope>
    <scope>DISRUPTION PHENOTYPE</scope>
</reference>
<reference key="8">
    <citation type="journal article" date="2009" name="J. Exp. Bot.">
        <title>Complete blockage of the mevalonate pathway results in male gametophyte lethality.</title>
        <authorList>
            <person name="Suzuki M."/>
            <person name="Nakagawa S."/>
            <person name="Kamide Y."/>
            <person name="Kobayashi K."/>
            <person name="Ohyama K."/>
            <person name="Hashinokuchi H."/>
            <person name="Kiuchi R."/>
            <person name="Saito K."/>
            <person name="Muranaka T."/>
            <person name="Nagata N."/>
        </authorList>
    </citation>
    <scope>FUNCTION</scope>
    <scope>DISRUPTION PHENOTYPE</scope>
    <scope>TISSUE SPECIFICITY</scope>
</reference>
<reference key="9">
    <citation type="journal article" date="2009" name="Phytochemistry">
        <title>Arabidopsis 3-hydroxy-3-methylglutaryl-CoA reductase is regulated at the post-translational level in response to alterations of the sphingolipid and the sterol biosynthetic pathways.</title>
        <authorList>
            <person name="Nieto B."/>
            <person name="Fores O."/>
            <person name="Arro M."/>
            <person name="Ferrer A."/>
        </authorList>
    </citation>
    <scope>FUNCTION</scope>
    <scope>ACTIVITY REGULATION</scope>
    <scope>INDUCTION</scope>
</reference>
<keyword id="KW-0256">Endoplasmic reticulum</keyword>
<keyword id="KW-0325">Glycoprotein</keyword>
<keyword id="KW-0414">Isoprene biosynthesis</keyword>
<keyword id="KW-0472">Membrane</keyword>
<keyword id="KW-0521">NADP</keyword>
<keyword id="KW-0560">Oxidoreductase</keyword>
<keyword id="KW-0597">Phosphoprotein</keyword>
<keyword id="KW-1185">Reference proteome</keyword>
<keyword id="KW-0812">Transmembrane</keyword>
<keyword id="KW-1133">Transmembrane helix</keyword>
<gene>
    <name type="primary">HMG2</name>
    <name type="synonym">HMGR2</name>
    <name type="ordered locus">At2g17370</name>
    <name type="ORF">F5J6.24</name>
</gene>
<proteinExistence type="evidence at transcript level"/>
<feature type="chain" id="PRO_0000114434" description="3-hydroxy-3-methylglutaryl-coenzyme A reductase 2">
    <location>
        <begin position="1"/>
        <end position="562"/>
    </location>
</feature>
<feature type="transmembrane region" description="Helical" evidence="3">
    <location>
        <begin position="32"/>
        <end position="56"/>
    </location>
</feature>
<feature type="transmembrane region" description="Helical" evidence="3">
    <location>
        <begin position="77"/>
        <end position="100"/>
    </location>
</feature>
<feature type="region of interest" description="Linker" evidence="1">
    <location>
        <begin position="101"/>
        <end position="146"/>
    </location>
</feature>
<feature type="region of interest" description="Catalytic" evidence="1">
    <location>
        <begin position="147"/>
        <end position="562"/>
    </location>
</feature>
<feature type="active site" description="Charge relay system" evidence="1">
    <location>
        <position position="240"/>
    </location>
</feature>
<feature type="active site" description="Charge relay system" evidence="1">
    <location>
        <position position="372"/>
    </location>
</feature>
<feature type="active site" description="Charge relay system" evidence="1">
    <location>
        <position position="448"/>
    </location>
</feature>
<feature type="active site" description="Proton donor" evidence="4">
    <location>
        <position position="544"/>
    </location>
</feature>
<feature type="modified residue" description="Phosphoserine" evidence="2">
    <location>
        <position position="550"/>
    </location>
</feature>
<feature type="glycosylation site" description="N-linked (GlcNAc...) asparagine" evidence="3">
    <location>
        <position position="118"/>
    </location>
</feature>
<feature type="glycosylation site" description="N-linked (GlcNAc...) asparagine" evidence="3">
    <location>
        <position position="304"/>
    </location>
</feature>
<feature type="glycosylation site" description="N-linked (GlcNAc...) asparagine" evidence="3">
    <location>
        <position position="548"/>
    </location>
</feature>
<comment type="function">
    <text evidence="5 6 7 8">Catalyzes the synthesis of mevalonate. The specific precursor of all isoprenoid compounds present in plants.</text>
</comment>
<comment type="catalytic activity">
    <reaction evidence="4">
        <text>(R)-mevalonate + 2 NADP(+) + CoA = (3S)-3-hydroxy-3-methylglutaryl-CoA + 2 NADPH + 2 H(+)</text>
        <dbReference type="Rhea" id="RHEA:15989"/>
        <dbReference type="ChEBI" id="CHEBI:15378"/>
        <dbReference type="ChEBI" id="CHEBI:36464"/>
        <dbReference type="ChEBI" id="CHEBI:43074"/>
        <dbReference type="ChEBI" id="CHEBI:57287"/>
        <dbReference type="ChEBI" id="CHEBI:57783"/>
        <dbReference type="ChEBI" id="CHEBI:58349"/>
        <dbReference type="EC" id="1.1.1.34"/>
    </reaction>
</comment>
<comment type="activity regulation">
    <text evidence="7">Regulated at the post-translational level in response to alterations of the sphingolipid and the sterol biosynthetic pathways.</text>
</comment>
<comment type="pathway">
    <text>Metabolic intermediate biosynthesis; (R)-mevalonate biosynthesis; (R)-mevalonate from acetyl-CoA: step 3/3.</text>
</comment>
<comment type="subcellular location">
    <subcellularLocation>
        <location evidence="10">Endoplasmic reticulum membrane</location>
        <topology evidence="10">Multi-pass membrane protein</topology>
    </subcellularLocation>
</comment>
<comment type="tissue specificity">
    <text evidence="8 9 10">Restricted to young seedlings, roots, and inflorescences. Expressed in root tips, shoot apex, secretory zone of the stigma, microspores, mature pollen grains, gynoecium vascular tissue and fertilized ovules.</text>
</comment>
<comment type="induction">
    <text evidence="7">Not regulated by myriocin, squalestatin or terbinafine.</text>
</comment>
<comment type="disruption phenotype">
    <text evidence="5 6 8">No visible phenotype under normal growth conditions, but 25% lower levels in triterpenoids content and 15% lower levels in sterol content. Hmg1 and hmg2 double mutants are lethal during male gametophyte development.</text>
</comment>
<comment type="similarity">
    <text evidence="11">Belongs to the HMG-CoA reductase family.</text>
</comment>